<sequence>MSCLKIITLFLFLAAVIASSIANQKGKHRVGAPEQINPNDANLKISLAKAISSQNAGVVVVKITKATRQVVAGFKYVVEFVAKVAGTNKQKVCRTVYIEQAWLKKTSVKNFSCK</sequence>
<reference key="1">
    <citation type="journal article" date="2019" name="Toxins">
        <title>Missiles of mass disruption: composition and glandular origin of venom used as a projectile defensive weapon by the assassin bug Platymeris rhadamanthus.</title>
        <authorList>
            <person name="Walker A.A."/>
            <person name="Robinson S.D."/>
            <person name="Undheim E.A.B."/>
            <person name="Jin J."/>
            <person name="Han X."/>
            <person name="Fry B.G."/>
            <person name="Vetter I."/>
            <person name="King G.F."/>
        </authorList>
    </citation>
    <scope>NUCLEOTIDE SEQUENCE [MRNA]</scope>
    <scope>IDENTIFICATION BY MASS SPECTROMETRY</scope>
    <scope>SUBCELLULAR LOCATION</scope>
    <scope>TISSUE SPECIFICITY</scope>
    <source>
        <tissue>Venom</tissue>
        <tissue>Venom gland</tissue>
    </source>
</reference>
<evidence type="ECO:0000255" key="1"/>
<evidence type="ECO:0000269" key="2">
    <source>
    </source>
</evidence>
<evidence type="ECO:0000303" key="3">
    <source>
    </source>
</evidence>
<evidence type="ECO:0000305" key="4"/>
<evidence type="ECO:0000305" key="5">
    <source>
    </source>
</evidence>
<evidence type="ECO:0000312" key="6">
    <source>
        <dbReference type="EMBL" id="QHB21503.1"/>
    </source>
</evidence>
<comment type="subcellular location">
    <subcellularLocation>
        <location evidence="2">Secreted</location>
    </subcellularLocation>
</comment>
<comment type="tissue specificity">
    <text evidence="5">Expressed by the venom gland (posterior main gland) (at protein level).</text>
</comment>
<comment type="similarity">
    <text evidence="4">Belongs to the cystatin family.</text>
</comment>
<protein>
    <recommendedName>
        <fullName evidence="3">Cystatin Pr17a</fullName>
    </recommendedName>
    <alternativeName>
        <fullName evidence="6">Venom cystatin domain peptide Pr17a</fullName>
    </alternativeName>
</protein>
<name>CYS17_PLARH</name>
<keyword id="KW-1015">Disulfide bond</keyword>
<keyword id="KW-0964">Secreted</keyword>
<keyword id="KW-0732">Signal</keyword>
<dbReference type="EMBL" id="MN208314">
    <property type="protein sequence ID" value="QHB21503.1"/>
    <property type="molecule type" value="mRNA"/>
</dbReference>
<dbReference type="SMR" id="A0A6B9L8T7"/>
<dbReference type="GO" id="GO:0005576">
    <property type="term" value="C:extracellular region"/>
    <property type="evidence" value="ECO:0007669"/>
    <property type="project" value="UniProtKB-SubCell"/>
</dbReference>
<dbReference type="GO" id="GO:0004869">
    <property type="term" value="F:cysteine-type endopeptidase inhibitor activity"/>
    <property type="evidence" value="ECO:0007669"/>
    <property type="project" value="InterPro"/>
</dbReference>
<dbReference type="CDD" id="cd00042">
    <property type="entry name" value="CY"/>
    <property type="match status" value="1"/>
</dbReference>
<dbReference type="Gene3D" id="3.10.450.10">
    <property type="match status" value="1"/>
</dbReference>
<dbReference type="InterPro" id="IPR000010">
    <property type="entry name" value="Cystatin_dom"/>
</dbReference>
<dbReference type="InterPro" id="IPR046350">
    <property type="entry name" value="Cystatin_sf"/>
</dbReference>
<dbReference type="Pfam" id="PF00031">
    <property type="entry name" value="Cystatin"/>
    <property type="match status" value="1"/>
</dbReference>
<dbReference type="SMART" id="SM00043">
    <property type="entry name" value="CY"/>
    <property type="match status" value="1"/>
</dbReference>
<dbReference type="SUPFAM" id="SSF54403">
    <property type="entry name" value="Cystatin/monellin"/>
    <property type="match status" value="1"/>
</dbReference>
<dbReference type="PROSITE" id="PS00287">
    <property type="entry name" value="CYSTATIN"/>
    <property type="match status" value="1"/>
</dbReference>
<proteinExistence type="evidence at protein level"/>
<feature type="signal peptide" evidence="1">
    <location>
        <begin position="1"/>
        <end position="18"/>
    </location>
</feature>
<feature type="chain" id="PRO_5025538806" description="Cystatin Pr17a">
    <location>
        <begin position="19"/>
        <end position="114"/>
    </location>
</feature>
<feature type="domain" description="Cystatin" evidence="1">
    <location>
        <begin position="31"/>
        <end position="109"/>
    </location>
</feature>
<feature type="disulfide bond" evidence="4">
    <location>
        <begin position="93"/>
        <end position="113"/>
    </location>
</feature>
<organism>
    <name type="scientific">Platymeris rhadamanthus</name>
    <name type="common">Red spot assassin bug</name>
    <dbReference type="NCBI Taxonomy" id="1134088"/>
    <lineage>
        <taxon>Eukaryota</taxon>
        <taxon>Metazoa</taxon>
        <taxon>Ecdysozoa</taxon>
        <taxon>Arthropoda</taxon>
        <taxon>Hexapoda</taxon>
        <taxon>Insecta</taxon>
        <taxon>Pterygota</taxon>
        <taxon>Neoptera</taxon>
        <taxon>Paraneoptera</taxon>
        <taxon>Hemiptera</taxon>
        <taxon>Heteroptera</taxon>
        <taxon>Panheteroptera</taxon>
        <taxon>Cimicomorpha</taxon>
        <taxon>Reduviidae</taxon>
        <taxon>Platymeris</taxon>
    </lineage>
</organism>
<accession>A0A6B9L8T7</accession>